<dbReference type="EC" id="6.3.4.2" evidence="1"/>
<dbReference type="EMBL" id="CP001396">
    <property type="protein sequence ID" value="ACR62682.1"/>
    <property type="molecule type" value="Genomic_DNA"/>
</dbReference>
<dbReference type="RefSeq" id="WP_000210878.1">
    <property type="nucleotide sequence ID" value="NC_012759.1"/>
</dbReference>
<dbReference type="SMR" id="C4ZZT3"/>
<dbReference type="MEROPS" id="C26.964"/>
<dbReference type="GeneID" id="93779218"/>
<dbReference type="KEGG" id="ebw:BWG_2515"/>
<dbReference type="HOGENOM" id="CLU_011675_5_0_6"/>
<dbReference type="UniPathway" id="UPA00159">
    <property type="reaction ID" value="UER00277"/>
</dbReference>
<dbReference type="GO" id="GO:0005829">
    <property type="term" value="C:cytosol"/>
    <property type="evidence" value="ECO:0007669"/>
    <property type="project" value="TreeGrafter"/>
</dbReference>
<dbReference type="GO" id="GO:0005524">
    <property type="term" value="F:ATP binding"/>
    <property type="evidence" value="ECO:0007669"/>
    <property type="project" value="UniProtKB-KW"/>
</dbReference>
<dbReference type="GO" id="GO:0003883">
    <property type="term" value="F:CTP synthase activity"/>
    <property type="evidence" value="ECO:0007669"/>
    <property type="project" value="UniProtKB-UniRule"/>
</dbReference>
<dbReference type="GO" id="GO:0004359">
    <property type="term" value="F:glutaminase activity"/>
    <property type="evidence" value="ECO:0007669"/>
    <property type="project" value="RHEA"/>
</dbReference>
<dbReference type="GO" id="GO:0042802">
    <property type="term" value="F:identical protein binding"/>
    <property type="evidence" value="ECO:0007669"/>
    <property type="project" value="TreeGrafter"/>
</dbReference>
<dbReference type="GO" id="GO:0046872">
    <property type="term" value="F:metal ion binding"/>
    <property type="evidence" value="ECO:0007669"/>
    <property type="project" value="UniProtKB-KW"/>
</dbReference>
<dbReference type="GO" id="GO:0044210">
    <property type="term" value="P:'de novo' CTP biosynthetic process"/>
    <property type="evidence" value="ECO:0007669"/>
    <property type="project" value="UniProtKB-UniRule"/>
</dbReference>
<dbReference type="GO" id="GO:0019856">
    <property type="term" value="P:pyrimidine nucleobase biosynthetic process"/>
    <property type="evidence" value="ECO:0007669"/>
    <property type="project" value="TreeGrafter"/>
</dbReference>
<dbReference type="CDD" id="cd03113">
    <property type="entry name" value="CTPS_N"/>
    <property type="match status" value="1"/>
</dbReference>
<dbReference type="CDD" id="cd01746">
    <property type="entry name" value="GATase1_CTP_Synthase"/>
    <property type="match status" value="1"/>
</dbReference>
<dbReference type="FunFam" id="3.40.50.300:FF:000009">
    <property type="entry name" value="CTP synthase"/>
    <property type="match status" value="1"/>
</dbReference>
<dbReference type="FunFam" id="3.40.50.880:FF:000002">
    <property type="entry name" value="CTP synthase"/>
    <property type="match status" value="1"/>
</dbReference>
<dbReference type="Gene3D" id="3.40.50.880">
    <property type="match status" value="1"/>
</dbReference>
<dbReference type="Gene3D" id="3.40.50.300">
    <property type="entry name" value="P-loop containing nucleotide triphosphate hydrolases"/>
    <property type="match status" value="1"/>
</dbReference>
<dbReference type="HAMAP" id="MF_01227">
    <property type="entry name" value="PyrG"/>
    <property type="match status" value="1"/>
</dbReference>
<dbReference type="InterPro" id="IPR029062">
    <property type="entry name" value="Class_I_gatase-like"/>
</dbReference>
<dbReference type="InterPro" id="IPR004468">
    <property type="entry name" value="CTP_synthase"/>
</dbReference>
<dbReference type="InterPro" id="IPR017456">
    <property type="entry name" value="CTP_synthase_N"/>
</dbReference>
<dbReference type="InterPro" id="IPR017926">
    <property type="entry name" value="GATASE"/>
</dbReference>
<dbReference type="InterPro" id="IPR033828">
    <property type="entry name" value="GATase1_CTP_Synthase"/>
</dbReference>
<dbReference type="InterPro" id="IPR027417">
    <property type="entry name" value="P-loop_NTPase"/>
</dbReference>
<dbReference type="NCBIfam" id="NF003792">
    <property type="entry name" value="PRK05380.1"/>
    <property type="match status" value="1"/>
</dbReference>
<dbReference type="NCBIfam" id="TIGR00337">
    <property type="entry name" value="PyrG"/>
    <property type="match status" value="1"/>
</dbReference>
<dbReference type="PANTHER" id="PTHR11550">
    <property type="entry name" value="CTP SYNTHASE"/>
    <property type="match status" value="1"/>
</dbReference>
<dbReference type="PANTHER" id="PTHR11550:SF0">
    <property type="entry name" value="CTP SYNTHASE-RELATED"/>
    <property type="match status" value="1"/>
</dbReference>
<dbReference type="Pfam" id="PF06418">
    <property type="entry name" value="CTP_synth_N"/>
    <property type="match status" value="1"/>
</dbReference>
<dbReference type="Pfam" id="PF00117">
    <property type="entry name" value="GATase"/>
    <property type="match status" value="1"/>
</dbReference>
<dbReference type="SUPFAM" id="SSF52317">
    <property type="entry name" value="Class I glutamine amidotransferase-like"/>
    <property type="match status" value="1"/>
</dbReference>
<dbReference type="SUPFAM" id="SSF52540">
    <property type="entry name" value="P-loop containing nucleoside triphosphate hydrolases"/>
    <property type="match status" value="1"/>
</dbReference>
<dbReference type="PROSITE" id="PS51273">
    <property type="entry name" value="GATASE_TYPE_1"/>
    <property type="match status" value="1"/>
</dbReference>
<gene>
    <name evidence="1" type="primary">pyrG</name>
    <name type="ordered locus">BWG_2515</name>
</gene>
<proteinExistence type="inferred from homology"/>
<accession>C4ZZT3</accession>
<sequence length="545" mass="60374">MTTNYIFVTGGVVSSLGKGIAAASLAAILEARGLNVTIMKLDPYINVDPGTMSPIQHGEVFVTEDGAETDLDLGHYERFIRTKMSRRNNFTTGRIYSDVLRKERRGDYLGATVQVIPHITNAIKERVLEGGEGHDVVLVEIGGTVGDIESLPFLEAIRQMAVEIGREHTLFMHLTLVPYMAASGEVKTKPTQHSVKELLSIGIQPDILICRSDRAVPANERAKIALFCNVPEKAVISLKDVDSIYKIPGLLKSQGLDDYICKRFSLNCPEANLSEWEQVIFEEANPVSEVTIGMVGKYIELPDAYKSVIEALKHGGLKNRVSVNIKLIDSQDVETRGVEILKGLDAILVPGGFGYRGVEGMITTARFARENNIPYLGICLGMQVALIDYARHVANMENANSTEFVPDCKYPVVALITEWRDENGNVEVRSEKSDLGGTMRLGAQQCQLVDDSLVRQLYNAPTIVERHRHRYEVNNMLLKQIEDAGLRVAGRSGDDQLVEIIEVPNHPWFVACQFHPEFTSTPRDGHPLFAGFVKAASEFQKRQAK</sequence>
<keyword id="KW-0067">ATP-binding</keyword>
<keyword id="KW-0315">Glutamine amidotransferase</keyword>
<keyword id="KW-0436">Ligase</keyword>
<keyword id="KW-0460">Magnesium</keyword>
<keyword id="KW-0479">Metal-binding</keyword>
<keyword id="KW-0547">Nucleotide-binding</keyword>
<keyword id="KW-0665">Pyrimidine biosynthesis</keyword>
<organism>
    <name type="scientific">Escherichia coli (strain K12 / MC4100 / BW2952)</name>
    <dbReference type="NCBI Taxonomy" id="595496"/>
    <lineage>
        <taxon>Bacteria</taxon>
        <taxon>Pseudomonadati</taxon>
        <taxon>Pseudomonadota</taxon>
        <taxon>Gammaproteobacteria</taxon>
        <taxon>Enterobacterales</taxon>
        <taxon>Enterobacteriaceae</taxon>
        <taxon>Escherichia</taxon>
    </lineage>
</organism>
<comment type="function">
    <text evidence="1">Catalyzes the ATP-dependent amination of UTP to CTP with either L-glutamine or ammonia as the source of nitrogen. Regulates intracellular CTP levels through interactions with the four ribonucleotide triphosphates.</text>
</comment>
<comment type="catalytic activity">
    <reaction evidence="1">
        <text>UTP + L-glutamine + ATP + H2O = CTP + L-glutamate + ADP + phosphate + 2 H(+)</text>
        <dbReference type="Rhea" id="RHEA:26426"/>
        <dbReference type="ChEBI" id="CHEBI:15377"/>
        <dbReference type="ChEBI" id="CHEBI:15378"/>
        <dbReference type="ChEBI" id="CHEBI:29985"/>
        <dbReference type="ChEBI" id="CHEBI:30616"/>
        <dbReference type="ChEBI" id="CHEBI:37563"/>
        <dbReference type="ChEBI" id="CHEBI:43474"/>
        <dbReference type="ChEBI" id="CHEBI:46398"/>
        <dbReference type="ChEBI" id="CHEBI:58359"/>
        <dbReference type="ChEBI" id="CHEBI:456216"/>
        <dbReference type="EC" id="6.3.4.2"/>
    </reaction>
</comment>
<comment type="catalytic activity">
    <reaction evidence="1">
        <text>L-glutamine + H2O = L-glutamate + NH4(+)</text>
        <dbReference type="Rhea" id="RHEA:15889"/>
        <dbReference type="ChEBI" id="CHEBI:15377"/>
        <dbReference type="ChEBI" id="CHEBI:28938"/>
        <dbReference type="ChEBI" id="CHEBI:29985"/>
        <dbReference type="ChEBI" id="CHEBI:58359"/>
    </reaction>
</comment>
<comment type="catalytic activity">
    <reaction evidence="1">
        <text>UTP + NH4(+) + ATP = CTP + ADP + phosphate + 2 H(+)</text>
        <dbReference type="Rhea" id="RHEA:16597"/>
        <dbReference type="ChEBI" id="CHEBI:15378"/>
        <dbReference type="ChEBI" id="CHEBI:28938"/>
        <dbReference type="ChEBI" id="CHEBI:30616"/>
        <dbReference type="ChEBI" id="CHEBI:37563"/>
        <dbReference type="ChEBI" id="CHEBI:43474"/>
        <dbReference type="ChEBI" id="CHEBI:46398"/>
        <dbReference type="ChEBI" id="CHEBI:456216"/>
    </reaction>
</comment>
<comment type="activity regulation">
    <text evidence="1">Allosterically activated by GTP, when glutamine is the substrate; GTP has no effect on the reaction when ammonia is the substrate. The allosteric effector GTP functions by stabilizing the protein conformation that binds the tetrahedral intermediate(s) formed during glutamine hydrolysis. Inhibited by the product CTP, via allosteric rather than competitive inhibition.</text>
</comment>
<comment type="pathway">
    <text evidence="1">Pyrimidine metabolism; CTP biosynthesis via de novo pathway; CTP from UDP: step 2/2.</text>
</comment>
<comment type="subunit">
    <text evidence="1">Homotetramer.</text>
</comment>
<comment type="miscellaneous">
    <text evidence="1">CTPSs have evolved a hybrid strategy for distinguishing between UTP and CTP. The overlapping regions of the product feedback inhibitory and substrate sites recognize a common feature in both compounds, the triphosphate moiety. To differentiate isosteric substrate and product pyrimidine rings, an additional pocket far from the expected kinase/ligase catalytic site, specifically recognizes the cytosine and ribose portions of the product inhibitor.</text>
</comment>
<comment type="similarity">
    <text evidence="1">Belongs to the CTP synthase family.</text>
</comment>
<evidence type="ECO:0000255" key="1">
    <source>
        <dbReference type="HAMAP-Rule" id="MF_01227"/>
    </source>
</evidence>
<reference key="1">
    <citation type="journal article" date="2009" name="J. Bacteriol.">
        <title>Genomic sequencing reveals regulatory mutations and recombinational events in the widely used MC4100 lineage of Escherichia coli K-12.</title>
        <authorList>
            <person name="Ferenci T."/>
            <person name="Zhou Z."/>
            <person name="Betteridge T."/>
            <person name="Ren Y."/>
            <person name="Liu Y."/>
            <person name="Feng L."/>
            <person name="Reeves P.R."/>
            <person name="Wang L."/>
        </authorList>
    </citation>
    <scope>NUCLEOTIDE SEQUENCE [LARGE SCALE GENOMIC DNA]</scope>
    <source>
        <strain>K12 / MC4100 / BW2952</strain>
    </source>
</reference>
<name>PYRG_ECOBW</name>
<protein>
    <recommendedName>
        <fullName evidence="1">CTP synthase</fullName>
        <ecNumber evidence="1">6.3.4.2</ecNumber>
    </recommendedName>
    <alternativeName>
        <fullName evidence="1">Cytidine 5'-triphosphate synthase</fullName>
    </alternativeName>
    <alternativeName>
        <fullName evidence="1">Cytidine triphosphate synthetase</fullName>
        <shortName evidence="1">CTP synthetase</shortName>
        <shortName evidence="1">CTPS</shortName>
    </alternativeName>
    <alternativeName>
        <fullName evidence="1">UTP--ammonia ligase</fullName>
    </alternativeName>
</protein>
<feature type="chain" id="PRO_1000214011" description="CTP synthase">
    <location>
        <begin position="1"/>
        <end position="545"/>
    </location>
</feature>
<feature type="domain" description="Glutamine amidotransferase type-1" evidence="1">
    <location>
        <begin position="291"/>
        <end position="542"/>
    </location>
</feature>
<feature type="region of interest" description="Amidoligase domain" evidence="1">
    <location>
        <begin position="1"/>
        <end position="266"/>
    </location>
</feature>
<feature type="active site" description="Nucleophile; for glutamine hydrolysis" evidence="1">
    <location>
        <position position="379"/>
    </location>
</feature>
<feature type="active site" evidence="1">
    <location>
        <position position="515"/>
    </location>
</feature>
<feature type="active site" evidence="1">
    <location>
        <position position="517"/>
    </location>
</feature>
<feature type="binding site" evidence="1">
    <location>
        <position position="14"/>
    </location>
    <ligand>
        <name>CTP</name>
        <dbReference type="ChEBI" id="CHEBI:37563"/>
        <note>allosteric inhibitor</note>
    </ligand>
</feature>
<feature type="binding site" evidence="1">
    <location>
        <position position="14"/>
    </location>
    <ligand>
        <name>UTP</name>
        <dbReference type="ChEBI" id="CHEBI:46398"/>
    </ligand>
</feature>
<feature type="binding site" evidence="1">
    <location>
        <begin position="15"/>
        <end position="20"/>
    </location>
    <ligand>
        <name>ATP</name>
        <dbReference type="ChEBI" id="CHEBI:30616"/>
    </ligand>
</feature>
<feature type="binding site" evidence="1">
    <location>
        <position position="72"/>
    </location>
    <ligand>
        <name>ATP</name>
        <dbReference type="ChEBI" id="CHEBI:30616"/>
    </ligand>
</feature>
<feature type="binding site" evidence="1">
    <location>
        <position position="72"/>
    </location>
    <ligand>
        <name>Mg(2+)</name>
        <dbReference type="ChEBI" id="CHEBI:18420"/>
    </ligand>
</feature>
<feature type="binding site" evidence="1">
    <location>
        <position position="140"/>
    </location>
    <ligand>
        <name>Mg(2+)</name>
        <dbReference type="ChEBI" id="CHEBI:18420"/>
    </ligand>
</feature>
<feature type="binding site" evidence="1">
    <location>
        <begin position="147"/>
        <end position="149"/>
    </location>
    <ligand>
        <name>CTP</name>
        <dbReference type="ChEBI" id="CHEBI:37563"/>
        <note>allosteric inhibitor</note>
    </ligand>
</feature>
<feature type="binding site" evidence="1">
    <location>
        <begin position="187"/>
        <end position="192"/>
    </location>
    <ligand>
        <name>CTP</name>
        <dbReference type="ChEBI" id="CHEBI:37563"/>
        <note>allosteric inhibitor</note>
    </ligand>
</feature>
<feature type="binding site" evidence="1">
    <location>
        <begin position="187"/>
        <end position="192"/>
    </location>
    <ligand>
        <name>UTP</name>
        <dbReference type="ChEBI" id="CHEBI:46398"/>
    </ligand>
</feature>
<feature type="binding site" evidence="1">
    <location>
        <position position="223"/>
    </location>
    <ligand>
        <name>CTP</name>
        <dbReference type="ChEBI" id="CHEBI:37563"/>
        <note>allosteric inhibitor</note>
    </ligand>
</feature>
<feature type="binding site" evidence="1">
    <location>
        <position position="223"/>
    </location>
    <ligand>
        <name>UTP</name>
        <dbReference type="ChEBI" id="CHEBI:46398"/>
    </ligand>
</feature>
<feature type="binding site" evidence="1">
    <location>
        <begin position="239"/>
        <end position="241"/>
    </location>
    <ligand>
        <name>ATP</name>
        <dbReference type="ChEBI" id="CHEBI:30616"/>
    </ligand>
</feature>
<feature type="binding site" evidence="1">
    <location>
        <position position="352"/>
    </location>
    <ligand>
        <name>L-glutamine</name>
        <dbReference type="ChEBI" id="CHEBI:58359"/>
    </ligand>
</feature>
<feature type="binding site" evidence="1">
    <location>
        <begin position="380"/>
        <end position="383"/>
    </location>
    <ligand>
        <name>L-glutamine</name>
        <dbReference type="ChEBI" id="CHEBI:58359"/>
    </ligand>
</feature>
<feature type="binding site" evidence="1">
    <location>
        <position position="403"/>
    </location>
    <ligand>
        <name>L-glutamine</name>
        <dbReference type="ChEBI" id="CHEBI:58359"/>
    </ligand>
</feature>
<feature type="binding site" evidence="1">
    <location>
        <position position="470"/>
    </location>
    <ligand>
        <name>L-glutamine</name>
        <dbReference type="ChEBI" id="CHEBI:58359"/>
    </ligand>
</feature>